<protein>
    <recommendedName>
        <fullName evidence="1">Protein SprT-like</fullName>
    </recommendedName>
</protein>
<accession>B1HY37</accession>
<organism>
    <name type="scientific">Lysinibacillus sphaericus (strain C3-41)</name>
    <dbReference type="NCBI Taxonomy" id="444177"/>
    <lineage>
        <taxon>Bacteria</taxon>
        <taxon>Bacillati</taxon>
        <taxon>Bacillota</taxon>
        <taxon>Bacilli</taxon>
        <taxon>Bacillales</taxon>
        <taxon>Bacillaceae</taxon>
        <taxon>Lysinibacillus</taxon>
    </lineage>
</organism>
<keyword id="KW-0963">Cytoplasm</keyword>
<keyword id="KW-0479">Metal-binding</keyword>
<keyword id="KW-0862">Zinc</keyword>
<feature type="chain" id="PRO_1000148323" description="Protein SprT-like">
    <location>
        <begin position="1"/>
        <end position="152"/>
    </location>
</feature>
<feature type="domain" description="SprT-like" evidence="1">
    <location>
        <begin position="6"/>
        <end position="151"/>
    </location>
</feature>
<feature type="active site" evidence="1">
    <location>
        <position position="68"/>
    </location>
</feature>
<feature type="binding site" evidence="1">
    <location>
        <position position="67"/>
    </location>
    <ligand>
        <name>Zn(2+)</name>
        <dbReference type="ChEBI" id="CHEBI:29105"/>
    </ligand>
</feature>
<feature type="binding site" evidence="1">
    <location>
        <position position="71"/>
    </location>
    <ligand>
        <name>Zn(2+)</name>
        <dbReference type="ChEBI" id="CHEBI:29105"/>
    </ligand>
</feature>
<reference key="1">
    <citation type="journal article" date="2008" name="J. Bacteriol.">
        <title>Complete genome sequence of the mosquitocidal bacterium Bacillus sphaericus C3-41 and comparison with those of closely related Bacillus species.</title>
        <authorList>
            <person name="Hu X."/>
            <person name="Fan W."/>
            <person name="Han B."/>
            <person name="Liu H."/>
            <person name="Zheng D."/>
            <person name="Li Q."/>
            <person name="Dong W."/>
            <person name="Yan J."/>
            <person name="Gao M."/>
            <person name="Berry C."/>
            <person name="Yuan Z."/>
        </authorList>
    </citation>
    <scope>NUCLEOTIDE SEQUENCE [LARGE SCALE GENOMIC DNA]</scope>
    <source>
        <strain>C3-41</strain>
    </source>
</reference>
<sequence>MDNEELQQLVCRISLESFQKPFIHQAYFNGRLRSTGGRYLLQSHNIEINPKAFELYGIKEIQGIVLHELCHYHLHIEGKGYQHRDKEFRELLKKVKAPRFCSALHTSKPSIKKQRRYTYTCVNCQQLYIRKIKMNVEKYCCSKCLGKLELLK</sequence>
<dbReference type="EMBL" id="CP000817">
    <property type="protein sequence ID" value="ACA41752.1"/>
    <property type="molecule type" value="Genomic_DNA"/>
</dbReference>
<dbReference type="RefSeq" id="WP_012295780.1">
    <property type="nucleotide sequence ID" value="NC_010382.1"/>
</dbReference>
<dbReference type="EnsemblBacteria" id="ACA41752">
    <property type="protein sequence ID" value="ACA41752"/>
    <property type="gene ID" value="Bsph_4293"/>
</dbReference>
<dbReference type="KEGG" id="lsp:Bsph_4293"/>
<dbReference type="HOGENOM" id="CLU_123820_0_0_9"/>
<dbReference type="Proteomes" id="UP000002164">
    <property type="component" value="Chromosome"/>
</dbReference>
<dbReference type="GO" id="GO:0005737">
    <property type="term" value="C:cytoplasm"/>
    <property type="evidence" value="ECO:0007669"/>
    <property type="project" value="UniProtKB-SubCell"/>
</dbReference>
<dbReference type="GO" id="GO:0008270">
    <property type="term" value="F:zinc ion binding"/>
    <property type="evidence" value="ECO:0007669"/>
    <property type="project" value="UniProtKB-UniRule"/>
</dbReference>
<dbReference type="GO" id="GO:0006950">
    <property type="term" value="P:response to stress"/>
    <property type="evidence" value="ECO:0007669"/>
    <property type="project" value="UniProtKB-ARBA"/>
</dbReference>
<dbReference type="HAMAP" id="MF_00745">
    <property type="entry name" value="SprT_like"/>
    <property type="match status" value="1"/>
</dbReference>
<dbReference type="InterPro" id="IPR006640">
    <property type="entry name" value="SprT-like_domain"/>
</dbReference>
<dbReference type="InterPro" id="IPR023524">
    <property type="entry name" value="Uncharacterised_SprT-like"/>
</dbReference>
<dbReference type="NCBIfam" id="NF003339">
    <property type="entry name" value="PRK04351.1"/>
    <property type="match status" value="1"/>
</dbReference>
<dbReference type="Pfam" id="PF10263">
    <property type="entry name" value="SprT-like"/>
    <property type="match status" value="1"/>
</dbReference>
<dbReference type="SMART" id="SM00731">
    <property type="entry name" value="SprT"/>
    <property type="match status" value="1"/>
</dbReference>
<gene>
    <name type="ordered locus">Bsph_4293</name>
</gene>
<name>SPRTL_LYSSC</name>
<evidence type="ECO:0000255" key="1">
    <source>
        <dbReference type="HAMAP-Rule" id="MF_00745"/>
    </source>
</evidence>
<comment type="cofactor">
    <cofactor evidence="1">
        <name>Zn(2+)</name>
        <dbReference type="ChEBI" id="CHEBI:29105"/>
    </cofactor>
    <text evidence="1">Binds 1 zinc ion.</text>
</comment>
<comment type="subcellular location">
    <subcellularLocation>
        <location evidence="1">Cytoplasm</location>
    </subcellularLocation>
</comment>
<comment type="similarity">
    <text evidence="1">Belongs to the SprT family.</text>
</comment>
<proteinExistence type="inferred from homology"/>